<proteinExistence type="predicted"/>
<protein>
    <recommendedName>
        <fullName>Uncharacterized HIT-like protein BB_0379</fullName>
    </recommendedName>
</protein>
<accession>P94252</accession>
<sequence>MYDCIFCKIINKELPSYKVYEDDLVLAFLDINPLTVGHTLVIPKEHSESLLNMDDKFNERVLKVCKKISNALKRINSSIYGGINIYSALGAGAGQEVFHTHFHVIPRFKNDGFGFKRGNKLNLEVEKFKELSMQISMNI</sequence>
<organism>
    <name type="scientific">Borreliella burgdorferi (strain ATCC 35210 / DSM 4680 / CIP 102532 / B31)</name>
    <name type="common">Borrelia burgdorferi</name>
    <dbReference type="NCBI Taxonomy" id="224326"/>
    <lineage>
        <taxon>Bacteria</taxon>
        <taxon>Pseudomonadati</taxon>
        <taxon>Spirochaetota</taxon>
        <taxon>Spirochaetia</taxon>
        <taxon>Spirochaetales</taxon>
        <taxon>Borreliaceae</taxon>
        <taxon>Borreliella</taxon>
    </lineage>
</organism>
<gene>
    <name type="ordered locus">BB_0379</name>
</gene>
<keyword id="KW-1185">Reference proteome</keyword>
<reference key="1">
    <citation type="journal article" date="1996" name="FEMS Microbiol. Lett.">
        <title>Identification and mapping of a chromosomal gene cluster of Borrelia burgdorferi containing genes expressed in vivo.</title>
        <authorList>
            <person name="Aron L."/>
            <person name="Toth C."/>
            <person name="Godfrey H.P."/>
            <person name="Cabello F.C."/>
        </authorList>
    </citation>
    <scope>NUCLEOTIDE SEQUENCE [GENOMIC DNA]</scope>
    <source>
        <strain>ATCC 53899 / 297</strain>
    </source>
</reference>
<reference key="2">
    <citation type="journal article" date="1997" name="Nature">
        <title>Genomic sequence of a Lyme disease spirochaete, Borrelia burgdorferi.</title>
        <authorList>
            <person name="Fraser C.M."/>
            <person name="Casjens S."/>
            <person name="Huang W.M."/>
            <person name="Sutton G.G."/>
            <person name="Clayton R.A."/>
            <person name="Lathigra R."/>
            <person name="White O."/>
            <person name="Ketchum K.A."/>
            <person name="Dodson R.J."/>
            <person name="Hickey E.K."/>
            <person name="Gwinn M.L."/>
            <person name="Dougherty B.A."/>
            <person name="Tomb J.-F."/>
            <person name="Fleischmann R.D."/>
            <person name="Richardson D.L."/>
            <person name="Peterson J.D."/>
            <person name="Kerlavage A.R."/>
            <person name="Quackenbush J."/>
            <person name="Salzberg S.L."/>
            <person name="Hanson M."/>
            <person name="van Vugt R."/>
            <person name="Palmer N."/>
            <person name="Adams M.D."/>
            <person name="Gocayne J.D."/>
            <person name="Weidman J.F."/>
            <person name="Utterback T.R."/>
            <person name="Watthey L."/>
            <person name="McDonald L.A."/>
            <person name="Artiach P."/>
            <person name="Bowman C."/>
            <person name="Garland S.A."/>
            <person name="Fujii C."/>
            <person name="Cotton M.D."/>
            <person name="Horst K."/>
            <person name="Roberts K.M."/>
            <person name="Hatch B."/>
            <person name="Smith H.O."/>
            <person name="Venter J.C."/>
        </authorList>
    </citation>
    <scope>NUCLEOTIDE SEQUENCE [LARGE SCALE GENOMIC DNA]</scope>
    <source>
        <strain>ATCC 35210 / DSM 4680 / CIP 102532 / B31</strain>
    </source>
</reference>
<dbReference type="EMBL" id="U49938">
    <property type="protein sequence ID" value="AAC44716.1"/>
    <property type="molecule type" value="Genomic_DNA"/>
</dbReference>
<dbReference type="EMBL" id="AE000783">
    <property type="protein sequence ID" value="AAC66761.2"/>
    <property type="molecule type" value="Genomic_DNA"/>
</dbReference>
<dbReference type="PIR" id="B70147">
    <property type="entry name" value="B70147"/>
</dbReference>
<dbReference type="RefSeq" id="NP_212513.2">
    <property type="nucleotide sequence ID" value="NC_001318.1"/>
</dbReference>
<dbReference type="RefSeq" id="WP_002656400.1">
    <property type="nucleotide sequence ID" value="NC_001318.1"/>
</dbReference>
<dbReference type="SMR" id="P94252"/>
<dbReference type="STRING" id="224326.BB_0379"/>
<dbReference type="PaxDb" id="224326-BB_0379"/>
<dbReference type="EnsemblBacteria" id="AAC66761">
    <property type="protein sequence ID" value="AAC66761"/>
    <property type="gene ID" value="BB_0379"/>
</dbReference>
<dbReference type="KEGG" id="bbu:BB_0379"/>
<dbReference type="PATRIC" id="fig|224326.49.peg.774"/>
<dbReference type="HOGENOM" id="CLU_056776_3_2_12"/>
<dbReference type="OrthoDB" id="9784774at2"/>
<dbReference type="Proteomes" id="UP000001807">
    <property type="component" value="Chromosome"/>
</dbReference>
<dbReference type="GO" id="GO:0003824">
    <property type="term" value="F:catalytic activity"/>
    <property type="evidence" value="ECO:0007669"/>
    <property type="project" value="InterPro"/>
</dbReference>
<dbReference type="GO" id="GO:0009117">
    <property type="term" value="P:nucleotide metabolic process"/>
    <property type="evidence" value="ECO:0007669"/>
    <property type="project" value="TreeGrafter"/>
</dbReference>
<dbReference type="CDD" id="cd01277">
    <property type="entry name" value="HINT_subgroup"/>
    <property type="match status" value="1"/>
</dbReference>
<dbReference type="Gene3D" id="3.30.428.10">
    <property type="entry name" value="HIT-like"/>
    <property type="match status" value="1"/>
</dbReference>
<dbReference type="InterPro" id="IPR039384">
    <property type="entry name" value="HINT"/>
</dbReference>
<dbReference type="InterPro" id="IPR019808">
    <property type="entry name" value="Histidine_triad_CS"/>
</dbReference>
<dbReference type="InterPro" id="IPR001310">
    <property type="entry name" value="Histidine_triad_HIT"/>
</dbReference>
<dbReference type="InterPro" id="IPR011146">
    <property type="entry name" value="HIT-like"/>
</dbReference>
<dbReference type="InterPro" id="IPR036265">
    <property type="entry name" value="HIT-like_sf"/>
</dbReference>
<dbReference type="PANTHER" id="PTHR46648:SF1">
    <property type="entry name" value="ADENOSINE 5'-MONOPHOSPHORAMIDASE HNT1"/>
    <property type="match status" value="1"/>
</dbReference>
<dbReference type="PANTHER" id="PTHR46648">
    <property type="entry name" value="HIT FAMILY PROTEIN 1"/>
    <property type="match status" value="1"/>
</dbReference>
<dbReference type="Pfam" id="PF01230">
    <property type="entry name" value="HIT"/>
    <property type="match status" value="1"/>
</dbReference>
<dbReference type="PRINTS" id="PR00332">
    <property type="entry name" value="HISTRIAD"/>
</dbReference>
<dbReference type="SUPFAM" id="SSF54197">
    <property type="entry name" value="HIT-like"/>
    <property type="match status" value="1"/>
</dbReference>
<dbReference type="PROSITE" id="PS00892">
    <property type="entry name" value="HIT_1"/>
    <property type="match status" value="1"/>
</dbReference>
<dbReference type="PROSITE" id="PS51084">
    <property type="entry name" value="HIT_2"/>
    <property type="match status" value="1"/>
</dbReference>
<evidence type="ECO:0000255" key="1">
    <source>
        <dbReference type="PROSITE-ProRule" id="PRU00464"/>
    </source>
</evidence>
<feature type="chain" id="PRO_0000109811" description="Uncharacterized HIT-like protein BB_0379">
    <location>
        <begin position="1"/>
        <end position="139"/>
    </location>
</feature>
<feature type="domain" description="HIT" evidence="1">
    <location>
        <begin position="5"/>
        <end position="114"/>
    </location>
</feature>
<feature type="short sequence motif" description="Histidine triad motif">
    <location>
        <begin position="99"/>
        <end position="103"/>
    </location>
</feature>
<name>YHIT_BORBU</name>